<proteinExistence type="evidence at protein level"/>
<reference key="1">
    <citation type="journal article" date="1999" name="Nature">
        <title>Sequence and analysis of chromosome 2 of the plant Arabidopsis thaliana.</title>
        <authorList>
            <person name="Lin X."/>
            <person name="Kaul S."/>
            <person name="Rounsley S.D."/>
            <person name="Shea T.P."/>
            <person name="Benito M.-I."/>
            <person name="Town C.D."/>
            <person name="Fujii C.Y."/>
            <person name="Mason T.M."/>
            <person name="Bowman C.L."/>
            <person name="Barnstead M.E."/>
            <person name="Feldblyum T.V."/>
            <person name="Buell C.R."/>
            <person name="Ketchum K.A."/>
            <person name="Lee J.J."/>
            <person name="Ronning C.M."/>
            <person name="Koo H.L."/>
            <person name="Moffat K.S."/>
            <person name="Cronin L.A."/>
            <person name="Shen M."/>
            <person name="Pai G."/>
            <person name="Van Aken S."/>
            <person name="Umayam L."/>
            <person name="Tallon L.J."/>
            <person name="Gill J.E."/>
            <person name="Adams M.D."/>
            <person name="Carrera A.J."/>
            <person name="Creasy T.H."/>
            <person name="Goodman H.M."/>
            <person name="Somerville C.R."/>
            <person name="Copenhaver G.P."/>
            <person name="Preuss D."/>
            <person name="Nierman W.C."/>
            <person name="White O."/>
            <person name="Eisen J.A."/>
            <person name="Salzberg S.L."/>
            <person name="Fraser C.M."/>
            <person name="Venter J.C."/>
        </authorList>
    </citation>
    <scope>NUCLEOTIDE SEQUENCE [LARGE SCALE GENOMIC DNA]</scope>
    <source>
        <strain>cv. Columbia</strain>
    </source>
</reference>
<reference key="2">
    <citation type="journal article" date="2017" name="Plant J.">
        <title>Araport11: a complete reannotation of the Arabidopsis thaliana reference genome.</title>
        <authorList>
            <person name="Cheng C.Y."/>
            <person name="Krishnakumar V."/>
            <person name="Chan A.P."/>
            <person name="Thibaud-Nissen F."/>
            <person name="Schobel S."/>
            <person name="Town C.D."/>
        </authorList>
    </citation>
    <scope>GENOME REANNOTATION</scope>
    <source>
        <strain>cv. Columbia</strain>
    </source>
</reference>
<reference key="3">
    <citation type="journal article" date="2006" name="Plant J.">
        <title>Functionally redundant SHI family genes regulate Arabidopsis gynoecium development in a dose-dependent manner.</title>
        <authorList>
            <person name="Kuusk S."/>
            <person name="Sohlberg J.J."/>
            <person name="Magnus Eklund D."/>
            <person name="Sundberg E."/>
        </authorList>
    </citation>
    <scope>FUNCTION</scope>
    <scope>DISRUPTION PHENOTYPE</scope>
    <scope>GENE FAMILY</scope>
    <scope>NOMENCLATURE</scope>
</reference>
<reference key="4">
    <citation type="journal article" date="2011" name="Plant Physiol.">
        <title>Expression of Arabidopsis SHORT INTERNODES/STYLISH family genes in auxin biosynthesis zones of aerial organs is dependent on a GCC box-like regulatory element.</title>
        <authorList>
            <person name="Eklund D.M."/>
            <person name="Cierlik I."/>
            <person name="Staaldal V."/>
            <person name="Claes A.R."/>
            <person name="Vestman D."/>
            <person name="Chandler J."/>
            <person name="Sundberg E."/>
        </authorList>
    </citation>
    <scope>TISSUE SPECIFICITY</scope>
    <scope>GENE FAMILY</scope>
</reference>
<evidence type="ECO:0000250" key="1"/>
<evidence type="ECO:0000256" key="2">
    <source>
        <dbReference type="SAM" id="MobiDB-lite"/>
    </source>
</evidence>
<evidence type="ECO:0000269" key="3">
    <source>
    </source>
</evidence>
<evidence type="ECO:0000269" key="4">
    <source>
    </source>
</evidence>
<evidence type="ECO:0000305" key="5"/>
<organism>
    <name type="scientific">Arabidopsis thaliana</name>
    <name type="common">Mouse-ear cress</name>
    <dbReference type="NCBI Taxonomy" id="3702"/>
    <lineage>
        <taxon>Eukaryota</taxon>
        <taxon>Viridiplantae</taxon>
        <taxon>Streptophyta</taxon>
        <taxon>Embryophyta</taxon>
        <taxon>Tracheophyta</taxon>
        <taxon>Spermatophyta</taxon>
        <taxon>Magnoliopsida</taxon>
        <taxon>eudicotyledons</taxon>
        <taxon>Gunneridae</taxon>
        <taxon>Pentapetalae</taxon>
        <taxon>rosids</taxon>
        <taxon>malvids</taxon>
        <taxon>Brassicales</taxon>
        <taxon>Brassicaceae</taxon>
        <taxon>Camelineae</taxon>
        <taxon>Arabidopsis</taxon>
    </lineage>
</organism>
<name>SRS4_ARATH</name>
<protein>
    <recommendedName>
        <fullName>Protein SHI RELATED SEQUENCE 4</fullName>
    </recommendedName>
</protein>
<feature type="chain" id="PRO_0000424576" description="Protein SHI RELATED SEQUENCE 4">
    <location>
        <begin position="1"/>
        <end position="222"/>
    </location>
</feature>
<feature type="DNA-binding region" description="Zn(2)-C6 fungal-type; degenerate" evidence="1">
    <location>
        <begin position="72"/>
        <end position="99"/>
    </location>
</feature>
<feature type="region of interest" description="Disordered" evidence="2">
    <location>
        <begin position="114"/>
        <end position="137"/>
    </location>
</feature>
<feature type="short sequence motif" description="Required for homo- and heterodimerization" evidence="1">
    <location>
        <begin position="191"/>
        <end position="194"/>
    </location>
</feature>
<feature type="compositionally biased region" description="Polar residues" evidence="2">
    <location>
        <begin position="118"/>
        <end position="128"/>
    </location>
</feature>
<feature type="binding site" evidence="1">
    <location>
        <position position="72"/>
    </location>
    <ligand>
        <name>Zn(2+)</name>
        <dbReference type="ChEBI" id="CHEBI:29105"/>
        <label>1</label>
    </ligand>
</feature>
<feature type="binding site" evidence="1">
    <location>
        <position position="72"/>
    </location>
    <ligand>
        <name>Zn(2+)</name>
        <dbReference type="ChEBI" id="CHEBI:29105"/>
        <label>2</label>
    </ligand>
</feature>
<feature type="binding site" evidence="1">
    <location>
        <position position="75"/>
    </location>
    <ligand>
        <name>Zn(2+)</name>
        <dbReference type="ChEBI" id="CHEBI:29105"/>
        <label>1</label>
    </ligand>
</feature>
<feature type="binding site" evidence="1">
    <location>
        <position position="83"/>
    </location>
    <ligand>
        <name>Zn(2+)</name>
        <dbReference type="ChEBI" id="CHEBI:29105"/>
        <label>1</label>
    </ligand>
</feature>
<feature type="binding site" evidence="1">
    <location>
        <position position="88"/>
    </location>
    <ligand>
        <name>Zn(2+)</name>
        <dbReference type="ChEBI" id="CHEBI:29105"/>
        <label>1</label>
    </ligand>
</feature>
<feature type="binding site" evidence="1">
    <location>
        <position position="88"/>
    </location>
    <ligand>
        <name>Zn(2+)</name>
        <dbReference type="ChEBI" id="CHEBI:29105"/>
        <label>2</label>
    </ligand>
</feature>
<feature type="binding site" evidence="1">
    <location>
        <position position="92"/>
    </location>
    <ligand>
        <name>Zn(2+)</name>
        <dbReference type="ChEBI" id="CHEBI:29105"/>
        <label>2</label>
    </ligand>
</feature>
<feature type="binding site" evidence="1">
    <location>
        <position position="99"/>
    </location>
    <ligand>
        <name>Zn(2+)</name>
        <dbReference type="ChEBI" id="CHEBI:29105"/>
        <label>2</label>
    </ligand>
</feature>
<gene>
    <name type="primary">SRS4</name>
    <name type="ordered locus">At2g18120</name>
    <name type="ORF">F8D23.10</name>
</gene>
<accession>Q9SI19</accession>
<dbReference type="EMBL" id="AC007212">
    <property type="protein sequence ID" value="AAD31354.1"/>
    <property type="molecule type" value="Genomic_DNA"/>
</dbReference>
<dbReference type="EMBL" id="CP002685">
    <property type="protein sequence ID" value="AEC06728.1"/>
    <property type="molecule type" value="Genomic_DNA"/>
</dbReference>
<dbReference type="PIR" id="E84560">
    <property type="entry name" value="E84560"/>
</dbReference>
<dbReference type="RefSeq" id="NP_179404.1">
    <property type="nucleotide sequence ID" value="NM_127369.3"/>
</dbReference>
<dbReference type="BioGRID" id="1682">
    <property type="interactions" value="17"/>
</dbReference>
<dbReference type="IntAct" id="Q9SI19">
    <property type="interactions" value="17"/>
</dbReference>
<dbReference type="STRING" id="3702.Q9SI19"/>
<dbReference type="PaxDb" id="3702-AT2G18120.1"/>
<dbReference type="ProteomicsDB" id="226741"/>
<dbReference type="EnsemblPlants" id="AT2G18120.1">
    <property type="protein sequence ID" value="AT2G18120.1"/>
    <property type="gene ID" value="AT2G18120"/>
</dbReference>
<dbReference type="GeneID" id="816325"/>
<dbReference type="Gramene" id="AT2G18120.1">
    <property type="protein sequence ID" value="AT2G18120.1"/>
    <property type="gene ID" value="AT2G18120"/>
</dbReference>
<dbReference type="KEGG" id="ath:AT2G18120"/>
<dbReference type="Araport" id="AT2G18120"/>
<dbReference type="TAIR" id="AT2G18120">
    <property type="gene designation" value="SRS4"/>
</dbReference>
<dbReference type="eggNOG" id="ENOG502SSG7">
    <property type="taxonomic scope" value="Eukaryota"/>
</dbReference>
<dbReference type="HOGENOM" id="CLU_1322507_0_0_1"/>
<dbReference type="InParanoid" id="Q9SI19"/>
<dbReference type="OMA" id="GPENRYN"/>
<dbReference type="PhylomeDB" id="Q9SI19"/>
<dbReference type="PRO" id="PR:Q9SI19"/>
<dbReference type="Proteomes" id="UP000006548">
    <property type="component" value="Chromosome 2"/>
</dbReference>
<dbReference type="ExpressionAtlas" id="Q9SI19">
    <property type="expression patterns" value="baseline and differential"/>
</dbReference>
<dbReference type="GO" id="GO:0005634">
    <property type="term" value="C:nucleus"/>
    <property type="evidence" value="ECO:0000250"/>
    <property type="project" value="UniProtKB"/>
</dbReference>
<dbReference type="GO" id="GO:0003677">
    <property type="term" value="F:DNA binding"/>
    <property type="evidence" value="ECO:0007669"/>
    <property type="project" value="UniProtKB-KW"/>
</dbReference>
<dbReference type="GO" id="GO:0003700">
    <property type="term" value="F:DNA-binding transcription factor activity"/>
    <property type="evidence" value="ECO:0007669"/>
    <property type="project" value="InterPro"/>
</dbReference>
<dbReference type="GO" id="GO:0046872">
    <property type="term" value="F:metal ion binding"/>
    <property type="evidence" value="ECO:0007669"/>
    <property type="project" value="UniProtKB-KW"/>
</dbReference>
<dbReference type="GO" id="GO:0009851">
    <property type="term" value="P:auxin biosynthetic process"/>
    <property type="evidence" value="ECO:0007669"/>
    <property type="project" value="UniProtKB-KW"/>
</dbReference>
<dbReference type="GO" id="GO:0009734">
    <property type="term" value="P:auxin-activated signaling pathway"/>
    <property type="evidence" value="ECO:0007669"/>
    <property type="project" value="UniProtKB-KW"/>
</dbReference>
<dbReference type="InterPro" id="IPR007818">
    <property type="entry name" value="SHI"/>
</dbReference>
<dbReference type="InterPro" id="IPR006511">
    <property type="entry name" value="SHI_C"/>
</dbReference>
<dbReference type="InterPro" id="IPR006510">
    <property type="entry name" value="Znf_LRP1"/>
</dbReference>
<dbReference type="NCBIfam" id="TIGR01624">
    <property type="entry name" value="LRP1_Cterm"/>
    <property type="match status" value="1"/>
</dbReference>
<dbReference type="NCBIfam" id="TIGR01623">
    <property type="entry name" value="put_zinc_LRP1"/>
    <property type="match status" value="1"/>
</dbReference>
<dbReference type="PANTHER" id="PTHR31604">
    <property type="entry name" value="PROTEIN LATERAL ROOT PRIMORDIUM 1"/>
    <property type="match status" value="1"/>
</dbReference>
<dbReference type="PANTHER" id="PTHR31604:SF26">
    <property type="entry name" value="PROTEIN SHI RELATED SEQUENCE 4"/>
    <property type="match status" value="1"/>
</dbReference>
<dbReference type="Pfam" id="PF05142">
    <property type="entry name" value="DUF702"/>
    <property type="match status" value="1"/>
</dbReference>
<keyword id="KW-0010">Activator</keyword>
<keyword id="KW-0073">Auxin biosynthesis</keyword>
<keyword id="KW-0927">Auxin signaling pathway</keyword>
<keyword id="KW-0217">Developmental protein</keyword>
<keyword id="KW-0238">DNA-binding</keyword>
<keyword id="KW-0479">Metal-binding</keyword>
<keyword id="KW-0539">Nucleus</keyword>
<keyword id="KW-1185">Reference proteome</keyword>
<keyword id="KW-0862">Zinc</keyword>
<comment type="function">
    <text evidence="3">Transcription activator that binds DNA on 5'-ACTCTAC-3' and promotes auxin homeostasis-regulating gene expression (e.g. YUC genes), as well as genes affecting stamen development, cell expansion and timing of flowering. Synergistically with other SHI-related proteins, regulates gynoecium, stamen and leaf development in a dose-dependent manner, controlling apical-basal patterning. Promotes style and stigma formation, and influences vascular development during gynoecium development. May also have a role in the formation and/or maintenance of the shoot apical meristem (SAM).</text>
</comment>
<comment type="interaction">
    <interactant intactId="EBI-15193733">
        <id>Q9SI19</id>
    </interactant>
    <interactant intactId="EBI-15191535">
        <id>O80748</id>
        <label>BBX26</label>
    </interactant>
    <organismsDiffer>false</organismsDiffer>
    <experiments>3</experiments>
</comment>
<comment type="interaction">
    <interactant intactId="EBI-15193733">
        <id>Q9SI19</id>
    </interactant>
    <interactant intactId="EBI-15199884">
        <id>Q94CK9-3</id>
        <label>LRP1</label>
    </interactant>
    <organismsDiffer>false</organismsDiffer>
    <experiments>5</experiments>
</comment>
<comment type="interaction">
    <interactant intactId="EBI-15193733">
        <id>Q9SI19</id>
    </interactant>
    <interactant intactId="EBI-15193025">
        <id>Q9LXU1</id>
        <label>NOT9B</label>
    </interactant>
    <organismsDiffer>false</organismsDiffer>
    <experiments>3</experiments>
</comment>
<comment type="interaction">
    <interactant intactId="EBI-15193733">
        <id>Q9SI19</id>
    </interactant>
    <interactant intactId="EBI-15205274">
        <id>Q9XGX0</id>
        <label>SHI</label>
    </interactant>
    <organismsDiffer>false</organismsDiffer>
    <experiments>5</experiments>
</comment>
<comment type="interaction">
    <interactant intactId="EBI-15193733">
        <id>Q9SI19</id>
    </interactant>
    <interactant intactId="EBI-15192995">
        <id>O65517</id>
        <label>SRS2</label>
    </interactant>
    <organismsDiffer>false</organismsDiffer>
    <experiments>5</experiments>
</comment>
<comment type="interaction">
    <interactant intactId="EBI-15193733">
        <id>Q9SI19</id>
    </interactant>
    <interactant intactId="EBI-15201394">
        <id>Q9M2U4</id>
        <label>SRS6</label>
    </interactant>
    <organismsDiffer>false</organismsDiffer>
    <experiments>4</experiments>
</comment>
<comment type="interaction">
    <interactant intactId="EBI-15193733">
        <id>Q9SI19</id>
    </interactant>
    <interactant intactId="EBI-15192325">
        <id>Q8LPR5</id>
        <label>TCP4</label>
    </interactant>
    <organismsDiffer>false</organismsDiffer>
    <experiments>3</experiments>
</comment>
<comment type="subcellular location">
    <subcellularLocation>
        <location evidence="1">Nucleus</location>
    </subcellularLocation>
</comment>
<comment type="tissue specificity">
    <text evidence="4">Expressed in cotyledon tips, leaf primordia, hydathodes, stipules, and lateral root primordia and weakly at the edges of petals and sepals.</text>
</comment>
<comment type="disruption phenotype">
    <text evidence="3">No visible phenotype.</text>
</comment>
<comment type="similarity">
    <text evidence="5">Belongs to the SHI protein family.</text>
</comment>
<sequence length="222" mass="24879">MSNFEMAGTGSSRNNEEDNQQNTNWVWYKHTNNNLSTSHNNQIWQQPSLDLYPGQIDVCDMTTSSRSLTISCQECGNQAKKGCTHGRCRTCCKSNGLHCPTHVRSTWIPIAKRRERQQQLQTPTSNPTGGSGRVGKYRDINQHATLDSSGLEMGETRFPDEVSSDALFRCVRMSGTDDGEGQYAYQTTVGIAGHLFKGILYNQGPENKSMRSTQFYENPPRS</sequence>